<feature type="chain" id="PRO_0000158473" description="Ribose-5-phosphate isomerase A">
    <location>
        <begin position="1"/>
        <end position="225"/>
    </location>
</feature>
<feature type="active site" description="Proton acceptor" evidence="1">
    <location>
        <position position="104"/>
    </location>
</feature>
<feature type="binding site" evidence="1">
    <location>
        <begin position="26"/>
        <end position="29"/>
    </location>
    <ligand>
        <name>substrate</name>
    </ligand>
</feature>
<feature type="binding site" evidence="1">
    <location>
        <begin position="82"/>
        <end position="85"/>
    </location>
    <ligand>
        <name>substrate</name>
    </ligand>
</feature>
<feature type="binding site" evidence="1">
    <location>
        <begin position="95"/>
        <end position="98"/>
    </location>
    <ligand>
        <name>substrate</name>
    </ligand>
</feature>
<feature type="binding site" evidence="1">
    <location>
        <position position="122"/>
    </location>
    <ligand>
        <name>substrate</name>
    </ligand>
</feature>
<feature type="helix" evidence="3">
    <location>
        <begin position="3"/>
        <end position="13"/>
    </location>
</feature>
<feature type="strand" evidence="3">
    <location>
        <begin position="21"/>
        <end position="24"/>
    </location>
</feature>
<feature type="helix" evidence="3">
    <location>
        <begin position="30"/>
        <end position="44"/>
    </location>
</feature>
<feature type="strand" evidence="3">
    <location>
        <begin position="49"/>
        <end position="54"/>
    </location>
</feature>
<feature type="helix" evidence="3">
    <location>
        <begin position="55"/>
        <end position="64"/>
    </location>
</feature>
<feature type="helix" evidence="3">
    <location>
        <begin position="71"/>
        <end position="73"/>
    </location>
</feature>
<feature type="strand" evidence="3">
    <location>
        <begin position="77"/>
        <end position="82"/>
    </location>
</feature>
<feature type="strand" evidence="3">
    <location>
        <begin position="85"/>
        <end position="87"/>
    </location>
</feature>
<feature type="helix" evidence="3">
    <location>
        <begin position="101"/>
        <end position="109"/>
    </location>
</feature>
<feature type="strand" evidence="3">
    <location>
        <begin position="111"/>
        <end position="119"/>
    </location>
</feature>
<feature type="helix" evidence="3">
    <location>
        <begin position="120"/>
        <end position="122"/>
    </location>
</feature>
<feature type="strand" evidence="3">
    <location>
        <begin position="125"/>
        <end position="127"/>
    </location>
</feature>
<feature type="strand" evidence="3">
    <location>
        <begin position="132"/>
        <end position="136"/>
    </location>
</feature>
<feature type="helix" evidence="3">
    <location>
        <begin position="141"/>
        <end position="150"/>
    </location>
</feature>
<feature type="strand" evidence="3">
    <location>
        <begin position="155"/>
        <end position="157"/>
    </location>
</feature>
<feature type="strand" evidence="3">
    <location>
        <begin position="172"/>
        <end position="176"/>
    </location>
</feature>
<feature type="helix" evidence="3">
    <location>
        <begin position="184"/>
        <end position="192"/>
    </location>
</feature>
<feature type="strand" evidence="3">
    <location>
        <begin position="197"/>
        <end position="203"/>
    </location>
</feature>
<feature type="strand" evidence="3">
    <location>
        <begin position="208"/>
        <end position="214"/>
    </location>
</feature>
<feature type="turn" evidence="3">
    <location>
        <begin position="215"/>
        <end position="218"/>
    </location>
</feature>
<feature type="strand" evidence="3">
    <location>
        <begin position="219"/>
        <end position="222"/>
    </location>
</feature>
<gene>
    <name evidence="1" type="primary">rpiA</name>
    <name type="ordered locus">SMU_1234</name>
</gene>
<organism>
    <name type="scientific">Streptococcus mutans serotype c (strain ATCC 700610 / UA159)</name>
    <dbReference type="NCBI Taxonomy" id="210007"/>
    <lineage>
        <taxon>Bacteria</taxon>
        <taxon>Bacillati</taxon>
        <taxon>Bacillota</taxon>
        <taxon>Bacilli</taxon>
        <taxon>Lactobacillales</taxon>
        <taxon>Streptococcaceae</taxon>
        <taxon>Streptococcus</taxon>
    </lineage>
</organism>
<reference key="1">
    <citation type="journal article" date="2002" name="Proc. Natl. Acad. Sci. U.S.A.">
        <title>Genome sequence of Streptococcus mutans UA159, a cariogenic dental pathogen.</title>
        <authorList>
            <person name="Ajdic D.J."/>
            <person name="McShan W.M."/>
            <person name="McLaughlin R.E."/>
            <person name="Savic G."/>
            <person name="Chang J."/>
            <person name="Carson M.B."/>
            <person name="Primeaux C."/>
            <person name="Tian R."/>
            <person name="Kenton S."/>
            <person name="Jia H.G."/>
            <person name="Lin S.P."/>
            <person name="Qian Y."/>
            <person name="Li S."/>
            <person name="Zhu H."/>
            <person name="Najar F.Z."/>
            <person name="Lai H."/>
            <person name="White J."/>
            <person name="Roe B.A."/>
            <person name="Ferretti J.J."/>
        </authorList>
    </citation>
    <scope>NUCLEOTIDE SEQUENCE [LARGE SCALE GENOMIC DNA]</scope>
    <source>
        <strain>ATCC 700610 / UA159</strain>
    </source>
</reference>
<reference key="2">
    <citation type="submission" date="2009-12" db="PDB data bank">
        <title>Crystal structure of ribose-5-phosphate isomerase a from str mutans ua159.</title>
        <authorList>
            <person name="Fan X.X."/>
            <person name="Wang K.T."/>
            <person name="Su X.D."/>
        </authorList>
    </citation>
    <scope>X-RAY CRYSTALLOGRAPHY (1.70 ANGSTROMS)</scope>
    <scope>SUBUNIT</scope>
</reference>
<evidence type="ECO:0000255" key="1">
    <source>
        <dbReference type="HAMAP-Rule" id="MF_00170"/>
    </source>
</evidence>
<evidence type="ECO:0000269" key="2">
    <source ref="2"/>
</evidence>
<evidence type="ECO:0007829" key="3">
    <source>
        <dbReference type="PDB" id="3L7O"/>
    </source>
</evidence>
<dbReference type="EC" id="5.3.1.6" evidence="1"/>
<dbReference type="EMBL" id="AE014133">
    <property type="protein sequence ID" value="AAN58919.1"/>
    <property type="molecule type" value="Genomic_DNA"/>
</dbReference>
<dbReference type="RefSeq" id="NP_721613.1">
    <property type="nucleotide sequence ID" value="NC_004350.2"/>
</dbReference>
<dbReference type="RefSeq" id="WP_002263209.1">
    <property type="nucleotide sequence ID" value="NC_004350.2"/>
</dbReference>
<dbReference type="PDB" id="3L7O">
    <property type="method" value="X-ray"/>
    <property type="resolution" value="1.70 A"/>
    <property type="chains" value="A/B=1-225"/>
</dbReference>
<dbReference type="PDBsum" id="3L7O"/>
<dbReference type="SMR" id="Q8DTT9"/>
<dbReference type="STRING" id="210007.SMU_1234"/>
<dbReference type="KEGG" id="smu:SMU_1234"/>
<dbReference type="PATRIC" id="fig|210007.7.peg.1107"/>
<dbReference type="eggNOG" id="COG0120">
    <property type="taxonomic scope" value="Bacteria"/>
</dbReference>
<dbReference type="HOGENOM" id="CLU_056590_1_0_9"/>
<dbReference type="OrthoDB" id="5870696at2"/>
<dbReference type="PhylomeDB" id="Q8DTT9"/>
<dbReference type="BRENDA" id="5.3.1.6">
    <property type="organism ID" value="5941"/>
</dbReference>
<dbReference type="UniPathway" id="UPA00115">
    <property type="reaction ID" value="UER00412"/>
</dbReference>
<dbReference type="EvolutionaryTrace" id="Q8DTT9"/>
<dbReference type="Proteomes" id="UP000002512">
    <property type="component" value="Chromosome"/>
</dbReference>
<dbReference type="GO" id="GO:0004751">
    <property type="term" value="F:ribose-5-phosphate isomerase activity"/>
    <property type="evidence" value="ECO:0007669"/>
    <property type="project" value="UniProtKB-UniRule"/>
</dbReference>
<dbReference type="GO" id="GO:0009052">
    <property type="term" value="P:pentose-phosphate shunt, non-oxidative branch"/>
    <property type="evidence" value="ECO:0007669"/>
    <property type="project" value="UniProtKB-UniRule"/>
</dbReference>
<dbReference type="CDD" id="cd01398">
    <property type="entry name" value="RPI_A"/>
    <property type="match status" value="1"/>
</dbReference>
<dbReference type="FunFam" id="3.40.50.1360:FF:000001">
    <property type="entry name" value="Ribose-5-phosphate isomerase A"/>
    <property type="match status" value="1"/>
</dbReference>
<dbReference type="Gene3D" id="3.30.70.260">
    <property type="match status" value="1"/>
</dbReference>
<dbReference type="Gene3D" id="3.40.50.1360">
    <property type="match status" value="1"/>
</dbReference>
<dbReference type="HAMAP" id="MF_00170">
    <property type="entry name" value="Rib_5P_isom_A"/>
    <property type="match status" value="1"/>
</dbReference>
<dbReference type="InterPro" id="IPR037171">
    <property type="entry name" value="NagB/RpiA_transferase-like"/>
</dbReference>
<dbReference type="InterPro" id="IPR050262">
    <property type="entry name" value="Ribose-5P_isomerase"/>
</dbReference>
<dbReference type="InterPro" id="IPR020672">
    <property type="entry name" value="Ribose5P_isomerase_typA_subgr"/>
</dbReference>
<dbReference type="InterPro" id="IPR004788">
    <property type="entry name" value="Ribose5P_isomerase_type_A"/>
</dbReference>
<dbReference type="NCBIfam" id="NF001924">
    <property type="entry name" value="PRK00702.1"/>
    <property type="match status" value="1"/>
</dbReference>
<dbReference type="NCBIfam" id="TIGR00021">
    <property type="entry name" value="rpiA"/>
    <property type="match status" value="1"/>
</dbReference>
<dbReference type="PANTHER" id="PTHR43748">
    <property type="entry name" value="RIBOSE-5-PHOSPHATE ISOMERASE 3, CHLOROPLASTIC-RELATED"/>
    <property type="match status" value="1"/>
</dbReference>
<dbReference type="PANTHER" id="PTHR43748:SF3">
    <property type="entry name" value="RIBOSE-5-PHOSPHATE ISOMERASE 3, CHLOROPLASTIC-RELATED"/>
    <property type="match status" value="1"/>
</dbReference>
<dbReference type="Pfam" id="PF06026">
    <property type="entry name" value="Rib_5-P_isom_A"/>
    <property type="match status" value="1"/>
</dbReference>
<dbReference type="SUPFAM" id="SSF75445">
    <property type="entry name" value="D-ribose-5-phosphate isomerase (RpiA), lid domain"/>
    <property type="match status" value="1"/>
</dbReference>
<dbReference type="SUPFAM" id="SSF100950">
    <property type="entry name" value="NagB/RpiA/CoA transferase-like"/>
    <property type="match status" value="1"/>
</dbReference>
<accession>Q8DTT9</accession>
<name>RPIA_STRMU</name>
<comment type="function">
    <text evidence="1">Catalyzes the reversible conversion of ribose-5-phosphate to ribulose 5-phosphate.</text>
</comment>
<comment type="catalytic activity">
    <reaction evidence="1">
        <text>aldehydo-D-ribose 5-phosphate = D-ribulose 5-phosphate</text>
        <dbReference type="Rhea" id="RHEA:14657"/>
        <dbReference type="ChEBI" id="CHEBI:58121"/>
        <dbReference type="ChEBI" id="CHEBI:58273"/>
        <dbReference type="EC" id="5.3.1.6"/>
    </reaction>
</comment>
<comment type="pathway">
    <text evidence="1">Carbohydrate degradation; pentose phosphate pathway; D-ribose 5-phosphate from D-ribulose 5-phosphate (non-oxidative stage): step 1/1.</text>
</comment>
<comment type="subunit">
    <text evidence="1 2">Homodimer.</text>
</comment>
<comment type="similarity">
    <text evidence="1">Belongs to the ribose 5-phosphate isomerase family.</text>
</comment>
<protein>
    <recommendedName>
        <fullName evidence="1">Ribose-5-phosphate isomerase A</fullName>
        <ecNumber evidence="1">5.3.1.6</ecNumber>
    </recommendedName>
    <alternativeName>
        <fullName evidence="1">Phosphoriboisomerase A</fullName>
        <shortName evidence="1">PRI</shortName>
    </alternativeName>
</protein>
<sequence length="225" mass="24568">MEELKKIAGVRAAQYVEDGMIVGLGTGSTAYYFVEEVGRRVQEEGLQVIGVTTSSRTTAQAQALGIPLKSIDEVDSVDVTVDGADEVDPNFNGIKGGGGALLMEKIVGTLTKDYIWVVDESKMVDTLGAFRLPVEVVQYGAERLFREFEKKGYKPSFREYDGVRFVTDMKNFIIDLDLGSIPDPIAFGNMLDHQVGVVEHGLFNGMVNRVIVAGKDGVRILEANK</sequence>
<proteinExistence type="evidence at protein level"/>
<keyword id="KW-0002">3D-structure</keyword>
<keyword id="KW-0413">Isomerase</keyword>
<keyword id="KW-1185">Reference proteome</keyword>